<sequence length="426" mass="48890">MKFTLLGFGLSNKEIFKYLVKNGHEVFVSEGKKLASSDKKLLLENGVQFEENGHTEKALECDIILVSPGVHFENEIIKEAKRRSIEIDTEISFCQREFEKIGWTPFVIAVTGSVGKSTTVSLIYHLLNKKVRALLAGNIGIPIAKLLNDNLRANYLVLEISSFQLFWSKRFKPNISSILNIYPNHLNWHPDMEHYVSSKFKIASFQSKDDVFVYNPNDEYIRKNLYKVSAKKVPFRFDFSIEKLPIHLRYRQTVENVAAAKTILETMGYEFKWEFLEDFEKLPHRMEYVTEINGVKFFNDSKATNAIAVIRAIENFDDKLHLIMAGIGKNEDYTLLAKIIKEKVKILALVGPIADEIEPYLDGVRYFKVDTINQAVNQLFSMASRGDVIMLSPGGASFDAFKNFEERGEYFKQLVMQLKEGNCEEC</sequence>
<gene>
    <name evidence="1" type="primary">murD</name>
    <name type="ordered locus">Tmel_0234</name>
</gene>
<accession>A6LJK7</accession>
<reference key="1">
    <citation type="submission" date="2007-05" db="EMBL/GenBank/DDBJ databases">
        <title>Complete sequence of Thermosipho melanesiensis BI429.</title>
        <authorList>
            <consortium name="US DOE Joint Genome Institute"/>
            <person name="Copeland A."/>
            <person name="Lucas S."/>
            <person name="Lapidus A."/>
            <person name="Barry K."/>
            <person name="Glavina del Rio T."/>
            <person name="Dalin E."/>
            <person name="Tice H."/>
            <person name="Pitluck S."/>
            <person name="Chertkov O."/>
            <person name="Brettin T."/>
            <person name="Bruce D."/>
            <person name="Detter J.C."/>
            <person name="Han C."/>
            <person name="Schmutz J."/>
            <person name="Larimer F."/>
            <person name="Land M."/>
            <person name="Hauser L."/>
            <person name="Kyrpides N."/>
            <person name="Mikhailova N."/>
            <person name="Nelson K."/>
            <person name="Gogarten J.P."/>
            <person name="Noll K."/>
            <person name="Richardson P."/>
        </authorList>
    </citation>
    <scope>NUCLEOTIDE SEQUENCE [LARGE SCALE GENOMIC DNA]</scope>
    <source>
        <strain>DSM 12029 / CIP 104789 / BI429</strain>
    </source>
</reference>
<proteinExistence type="inferred from homology"/>
<feature type="chain" id="PRO_1000056889" description="UDP-N-acetylmuramoylalanine--D-glutamate ligase">
    <location>
        <begin position="1"/>
        <end position="426"/>
    </location>
</feature>
<feature type="binding site" evidence="1">
    <location>
        <begin position="112"/>
        <end position="118"/>
    </location>
    <ligand>
        <name>ATP</name>
        <dbReference type="ChEBI" id="CHEBI:30616"/>
    </ligand>
</feature>
<dbReference type="EC" id="6.3.2.9" evidence="1"/>
<dbReference type="EMBL" id="CP000716">
    <property type="protein sequence ID" value="ABR30108.1"/>
    <property type="molecule type" value="Genomic_DNA"/>
</dbReference>
<dbReference type="RefSeq" id="WP_012056469.1">
    <property type="nucleotide sequence ID" value="NC_009616.1"/>
</dbReference>
<dbReference type="SMR" id="A6LJK7"/>
<dbReference type="STRING" id="391009.Tmel_0234"/>
<dbReference type="KEGG" id="tme:Tmel_0234"/>
<dbReference type="eggNOG" id="COG0771">
    <property type="taxonomic scope" value="Bacteria"/>
</dbReference>
<dbReference type="HOGENOM" id="CLU_032540_0_1_0"/>
<dbReference type="OrthoDB" id="9809796at2"/>
<dbReference type="UniPathway" id="UPA00219"/>
<dbReference type="Proteomes" id="UP000001110">
    <property type="component" value="Chromosome"/>
</dbReference>
<dbReference type="GO" id="GO:0005737">
    <property type="term" value="C:cytoplasm"/>
    <property type="evidence" value="ECO:0007669"/>
    <property type="project" value="UniProtKB-SubCell"/>
</dbReference>
<dbReference type="GO" id="GO:0005524">
    <property type="term" value="F:ATP binding"/>
    <property type="evidence" value="ECO:0007669"/>
    <property type="project" value="UniProtKB-UniRule"/>
</dbReference>
<dbReference type="GO" id="GO:0008764">
    <property type="term" value="F:UDP-N-acetylmuramoylalanine-D-glutamate ligase activity"/>
    <property type="evidence" value="ECO:0007669"/>
    <property type="project" value="UniProtKB-UniRule"/>
</dbReference>
<dbReference type="GO" id="GO:0051301">
    <property type="term" value="P:cell division"/>
    <property type="evidence" value="ECO:0007669"/>
    <property type="project" value="UniProtKB-KW"/>
</dbReference>
<dbReference type="GO" id="GO:0071555">
    <property type="term" value="P:cell wall organization"/>
    <property type="evidence" value="ECO:0007669"/>
    <property type="project" value="UniProtKB-KW"/>
</dbReference>
<dbReference type="GO" id="GO:0009252">
    <property type="term" value="P:peptidoglycan biosynthetic process"/>
    <property type="evidence" value="ECO:0007669"/>
    <property type="project" value="UniProtKB-UniRule"/>
</dbReference>
<dbReference type="GO" id="GO:0008360">
    <property type="term" value="P:regulation of cell shape"/>
    <property type="evidence" value="ECO:0007669"/>
    <property type="project" value="UniProtKB-KW"/>
</dbReference>
<dbReference type="Gene3D" id="3.90.190.20">
    <property type="entry name" value="Mur ligase, C-terminal domain"/>
    <property type="match status" value="1"/>
</dbReference>
<dbReference type="Gene3D" id="3.40.1190.10">
    <property type="entry name" value="Mur-like, catalytic domain"/>
    <property type="match status" value="1"/>
</dbReference>
<dbReference type="Gene3D" id="3.40.50.720">
    <property type="entry name" value="NAD(P)-binding Rossmann-like Domain"/>
    <property type="match status" value="1"/>
</dbReference>
<dbReference type="HAMAP" id="MF_00639">
    <property type="entry name" value="MurD"/>
    <property type="match status" value="1"/>
</dbReference>
<dbReference type="InterPro" id="IPR036565">
    <property type="entry name" value="Mur-like_cat_sf"/>
</dbReference>
<dbReference type="InterPro" id="IPR004101">
    <property type="entry name" value="Mur_ligase_C"/>
</dbReference>
<dbReference type="InterPro" id="IPR036615">
    <property type="entry name" value="Mur_ligase_C_dom_sf"/>
</dbReference>
<dbReference type="InterPro" id="IPR013221">
    <property type="entry name" value="Mur_ligase_cen"/>
</dbReference>
<dbReference type="InterPro" id="IPR005762">
    <property type="entry name" value="MurD"/>
</dbReference>
<dbReference type="NCBIfam" id="TIGR01087">
    <property type="entry name" value="murD"/>
    <property type="match status" value="1"/>
</dbReference>
<dbReference type="PANTHER" id="PTHR43692">
    <property type="entry name" value="UDP-N-ACETYLMURAMOYLALANINE--D-GLUTAMATE LIGASE"/>
    <property type="match status" value="1"/>
</dbReference>
<dbReference type="PANTHER" id="PTHR43692:SF1">
    <property type="entry name" value="UDP-N-ACETYLMURAMOYLALANINE--D-GLUTAMATE LIGASE"/>
    <property type="match status" value="1"/>
</dbReference>
<dbReference type="Pfam" id="PF02875">
    <property type="entry name" value="Mur_ligase_C"/>
    <property type="match status" value="1"/>
</dbReference>
<dbReference type="Pfam" id="PF08245">
    <property type="entry name" value="Mur_ligase_M"/>
    <property type="match status" value="1"/>
</dbReference>
<dbReference type="Pfam" id="PF21377">
    <property type="entry name" value="MurD_N"/>
    <property type="match status" value="1"/>
</dbReference>
<dbReference type="SUPFAM" id="SSF51984">
    <property type="entry name" value="MurCD N-terminal domain"/>
    <property type="match status" value="1"/>
</dbReference>
<dbReference type="SUPFAM" id="SSF53623">
    <property type="entry name" value="MurD-like peptide ligases, catalytic domain"/>
    <property type="match status" value="1"/>
</dbReference>
<dbReference type="SUPFAM" id="SSF53244">
    <property type="entry name" value="MurD-like peptide ligases, peptide-binding domain"/>
    <property type="match status" value="1"/>
</dbReference>
<protein>
    <recommendedName>
        <fullName evidence="1">UDP-N-acetylmuramoylalanine--D-glutamate ligase</fullName>
        <ecNumber evidence="1">6.3.2.9</ecNumber>
    </recommendedName>
    <alternativeName>
        <fullName evidence="1">D-glutamic acid-adding enzyme</fullName>
    </alternativeName>
    <alternativeName>
        <fullName evidence="1">UDP-N-acetylmuramoyl-L-alanyl-D-glutamate synthetase</fullName>
    </alternativeName>
</protein>
<comment type="function">
    <text evidence="1">Cell wall formation. Catalyzes the addition of glutamate to the nucleotide precursor UDP-N-acetylmuramoyl-L-alanine (UMA).</text>
</comment>
<comment type="catalytic activity">
    <reaction evidence="1">
        <text>UDP-N-acetyl-alpha-D-muramoyl-L-alanine + D-glutamate + ATP = UDP-N-acetyl-alpha-D-muramoyl-L-alanyl-D-glutamate + ADP + phosphate + H(+)</text>
        <dbReference type="Rhea" id="RHEA:16429"/>
        <dbReference type="ChEBI" id="CHEBI:15378"/>
        <dbReference type="ChEBI" id="CHEBI:29986"/>
        <dbReference type="ChEBI" id="CHEBI:30616"/>
        <dbReference type="ChEBI" id="CHEBI:43474"/>
        <dbReference type="ChEBI" id="CHEBI:83898"/>
        <dbReference type="ChEBI" id="CHEBI:83900"/>
        <dbReference type="ChEBI" id="CHEBI:456216"/>
        <dbReference type="EC" id="6.3.2.9"/>
    </reaction>
</comment>
<comment type="pathway">
    <text evidence="1">Cell wall biogenesis; peptidoglycan biosynthesis.</text>
</comment>
<comment type="subcellular location">
    <subcellularLocation>
        <location evidence="1">Cytoplasm</location>
    </subcellularLocation>
</comment>
<comment type="similarity">
    <text evidence="1">Belongs to the MurCDEF family.</text>
</comment>
<organism>
    <name type="scientific">Thermosipho melanesiensis (strain DSM 12029 / CIP 104789 / BI429)</name>
    <dbReference type="NCBI Taxonomy" id="391009"/>
    <lineage>
        <taxon>Bacteria</taxon>
        <taxon>Thermotogati</taxon>
        <taxon>Thermotogota</taxon>
        <taxon>Thermotogae</taxon>
        <taxon>Thermotogales</taxon>
        <taxon>Fervidobacteriaceae</taxon>
        <taxon>Thermosipho</taxon>
    </lineage>
</organism>
<keyword id="KW-0067">ATP-binding</keyword>
<keyword id="KW-0131">Cell cycle</keyword>
<keyword id="KW-0132">Cell division</keyword>
<keyword id="KW-0133">Cell shape</keyword>
<keyword id="KW-0961">Cell wall biogenesis/degradation</keyword>
<keyword id="KW-0963">Cytoplasm</keyword>
<keyword id="KW-0436">Ligase</keyword>
<keyword id="KW-0547">Nucleotide-binding</keyword>
<keyword id="KW-0573">Peptidoglycan synthesis</keyword>
<name>MURD_THEM4</name>
<evidence type="ECO:0000255" key="1">
    <source>
        <dbReference type="HAMAP-Rule" id="MF_00639"/>
    </source>
</evidence>